<gene>
    <name type="primary">ZFP69</name>
    <name type="synonym">ZNF642</name>
</gene>
<feature type="chain" id="PRO_0000252161" description="Zinc finger protein 69 homolog">
    <location>
        <begin position="1"/>
        <end position="526"/>
    </location>
</feature>
<feature type="domain" description="SCAN box">
    <location>
        <begin position="1"/>
        <end position="39"/>
    </location>
</feature>
<feature type="domain" description="KRAB" evidence="3">
    <location>
        <begin position="76"/>
        <end position="147"/>
    </location>
</feature>
<feature type="zinc finger region" description="C2H2-type 1" evidence="2">
    <location>
        <begin position="271"/>
        <end position="293"/>
    </location>
</feature>
<feature type="zinc finger region" description="C2H2-type 2" evidence="2">
    <location>
        <begin position="299"/>
        <end position="321"/>
    </location>
</feature>
<feature type="zinc finger region" description="C2H2-type 3" evidence="2">
    <location>
        <begin position="327"/>
        <end position="349"/>
    </location>
</feature>
<feature type="zinc finger region" description="C2H2-type 4" evidence="2">
    <location>
        <begin position="355"/>
        <end position="377"/>
    </location>
</feature>
<feature type="zinc finger region" description="C2H2-type 5" evidence="2">
    <location>
        <begin position="383"/>
        <end position="405"/>
    </location>
</feature>
<feature type="zinc finger region" description="C2H2-type 6" evidence="2">
    <location>
        <begin position="411"/>
        <end position="433"/>
    </location>
</feature>
<feature type="zinc finger region" description="C2H2-type 7" evidence="2">
    <location>
        <begin position="439"/>
        <end position="461"/>
    </location>
</feature>
<feature type="zinc finger region" description="C2H2-type 8" evidence="2">
    <location>
        <begin position="467"/>
        <end position="489"/>
    </location>
</feature>
<feature type="zinc finger region" description="C2H2-type 9" evidence="2">
    <location>
        <begin position="495"/>
        <end position="517"/>
    </location>
</feature>
<feature type="sequence variant" id="VAR_033583" description="In dbSNP:rs34752670.">
    <original>V</original>
    <variation>L</variation>
    <location>
        <position position="113"/>
    </location>
</feature>
<feature type="sequence conflict" description="In Ref. 3; AAH41873." evidence="5" ref="3">
    <original>T</original>
    <variation>A</variation>
    <location>
        <position position="159"/>
    </location>
</feature>
<name>ZFP69_HUMAN</name>
<evidence type="ECO:0000250" key="1">
    <source>
        <dbReference type="UniProtKB" id="A2A761"/>
    </source>
</evidence>
<evidence type="ECO:0000255" key="2">
    <source>
        <dbReference type="PROSITE-ProRule" id="PRU00042"/>
    </source>
</evidence>
<evidence type="ECO:0000255" key="3">
    <source>
        <dbReference type="PROSITE-ProRule" id="PRU00119"/>
    </source>
</evidence>
<evidence type="ECO:0000269" key="4">
    <source>
    </source>
</evidence>
<evidence type="ECO:0000305" key="5"/>
<protein>
    <recommendedName>
        <fullName evidence="1">Zinc finger protein 69 homolog</fullName>
    </recommendedName>
    <alternativeName>
        <fullName>Zinc finger protein 642</fullName>
    </alternativeName>
</protein>
<sequence>MPQQLLITLPTEASTWVKLQHPKKAVEGAPLWEDVTKMFEGEALLSQDAEDVKTQRESLEDEVTPGLPTAESQELLTFKDISIDFTQEEWGQLAPAHQNLYREVMLENYSNLVSVGYQLSKPSVISQLEKGEEPWMAEKEGPGDPSSDLKSKIETIESTAKSTISQERLYHGIMMESFMRDDIIYSTLRKVSTYDDVLERHQETCMRDVRQAILTHKKRVQETNKFGENIIVHSNVIIEQRHHKYDTPTKRNTYKLDLINHPTSYIRTKTYECNICEKIFKQPIHLTEHMRIHTGEKPFRCKECGRAFSQSASLSTHQRIHTGEKPFECEECGKAFRHRSSLNQHHRTHTGEKPYVCDKCQKAFSQNISLVQHLRTHSGEKPFTCNECGKTFRQIRHLSEHIRIHTGEKPYACTACCKTFSHRAYLTHHQRIHTGERPYKCKECGKAFRQRIHLSNHKTVHTGVKAYECNRCGKAYRHDSSFKKHQRHHTGEKPYECNECGKAFSYNSSLSRHHEIHRRNAFRNKV</sequence>
<proteinExistence type="evidence at protein level"/>
<accession>Q49AA0</accession>
<accession>Q5SWM5</accession>
<accession>Q6ZWK8</accession>
<keyword id="KW-0238">DNA-binding</keyword>
<keyword id="KW-0443">Lipid metabolism</keyword>
<keyword id="KW-0479">Metal-binding</keyword>
<keyword id="KW-0539">Nucleus</keyword>
<keyword id="KW-1267">Proteomics identification</keyword>
<keyword id="KW-1185">Reference proteome</keyword>
<keyword id="KW-0677">Repeat</keyword>
<keyword id="KW-0804">Transcription</keyword>
<keyword id="KW-0805">Transcription regulation</keyword>
<keyword id="KW-0862">Zinc</keyword>
<keyword id="KW-0863">Zinc-finger</keyword>
<comment type="function">
    <text evidence="1">Putative transcription factor that appears to regulate lipid metabolism.</text>
</comment>
<comment type="subcellular location">
    <subcellularLocation>
        <location evidence="1">Nucleus</location>
    </subcellularLocation>
</comment>
<comment type="tissue specificity">
    <text evidence="4">Expressed in visceral and subcutaneous adipose tissue.</text>
</comment>
<comment type="induction">
    <text evidence="4">Up-regulated in both visceral and subcutaneous adipose tissue of diabetic individuals.</text>
</comment>
<comment type="similarity">
    <text evidence="5">Belongs to the krueppel C2H2-type zinc-finger protein family.</text>
</comment>
<comment type="sequence caution" evidence="5">
    <conflict type="erroneous termination">
        <sequence resource="EMBL-CDS" id="BAC85492"/>
    </conflict>
    <text>Truncated C-terminus.</text>
</comment>
<organism>
    <name type="scientific">Homo sapiens</name>
    <name type="common">Human</name>
    <dbReference type="NCBI Taxonomy" id="9606"/>
    <lineage>
        <taxon>Eukaryota</taxon>
        <taxon>Metazoa</taxon>
        <taxon>Chordata</taxon>
        <taxon>Craniata</taxon>
        <taxon>Vertebrata</taxon>
        <taxon>Euteleostomi</taxon>
        <taxon>Mammalia</taxon>
        <taxon>Eutheria</taxon>
        <taxon>Euarchontoglires</taxon>
        <taxon>Primates</taxon>
        <taxon>Haplorrhini</taxon>
        <taxon>Catarrhini</taxon>
        <taxon>Hominidae</taxon>
        <taxon>Homo</taxon>
    </lineage>
</organism>
<dbReference type="EMBL" id="AK122618">
    <property type="protein sequence ID" value="BAC85492.1"/>
    <property type="status" value="ALT_SEQ"/>
    <property type="molecule type" value="mRNA"/>
</dbReference>
<dbReference type="EMBL" id="AL603839">
    <property type="status" value="NOT_ANNOTATED_CDS"/>
    <property type="molecule type" value="Genomic_DNA"/>
</dbReference>
<dbReference type="EMBL" id="BC041873">
    <property type="protein sequence ID" value="AAH41873.1"/>
    <property type="molecule type" value="mRNA"/>
</dbReference>
<dbReference type="CCDS" id="CCDS30686.1"/>
<dbReference type="RefSeq" id="NP_001307107.1">
    <property type="nucleotide sequence ID" value="NM_001320178.1"/>
</dbReference>
<dbReference type="RefSeq" id="NP_001307108.1">
    <property type="nucleotide sequence ID" value="NM_001320179.2"/>
</dbReference>
<dbReference type="RefSeq" id="NP_940896.2">
    <property type="nucleotide sequence ID" value="NM_198494.3"/>
</dbReference>
<dbReference type="RefSeq" id="XP_006710669.1">
    <property type="nucleotide sequence ID" value="XM_006710606.4"/>
</dbReference>
<dbReference type="RefSeq" id="XP_054192280.1">
    <property type="nucleotide sequence ID" value="XM_054336305.1"/>
</dbReference>
<dbReference type="SMR" id="Q49AA0"/>
<dbReference type="BioGRID" id="130907">
    <property type="interactions" value="1"/>
</dbReference>
<dbReference type="FunCoup" id="Q49AA0">
    <property type="interactions" value="429"/>
</dbReference>
<dbReference type="STRING" id="9606.ENSP00000361791"/>
<dbReference type="GlyGen" id="Q49AA0">
    <property type="glycosylation" value="3 sites, 1 O-linked glycan (3 sites)"/>
</dbReference>
<dbReference type="iPTMnet" id="Q49AA0"/>
<dbReference type="PhosphoSitePlus" id="Q49AA0"/>
<dbReference type="BioMuta" id="ZFP69"/>
<dbReference type="DMDM" id="115502934"/>
<dbReference type="jPOST" id="Q49AA0"/>
<dbReference type="MassIVE" id="Q49AA0"/>
<dbReference type="PaxDb" id="9606-ENSP00000361791"/>
<dbReference type="PeptideAtlas" id="Q49AA0"/>
<dbReference type="ProteomicsDB" id="62038"/>
<dbReference type="Antibodypedia" id="32097">
    <property type="antibodies" value="40 antibodies from 16 providers"/>
</dbReference>
<dbReference type="DNASU" id="339559"/>
<dbReference type="Ensembl" id="ENST00000372705.3">
    <property type="protein sequence ID" value="ENSP00000361790.3"/>
    <property type="gene ID" value="ENSG00000187815.10"/>
</dbReference>
<dbReference type="Ensembl" id="ENST00000372706.6">
    <property type="protein sequence ID" value="ENSP00000361791.1"/>
    <property type="gene ID" value="ENSG00000187815.10"/>
</dbReference>
<dbReference type="GeneID" id="339559"/>
<dbReference type="KEGG" id="hsa:339559"/>
<dbReference type="MANE-Select" id="ENST00000372706.6">
    <property type="protein sequence ID" value="ENSP00000361791.1"/>
    <property type="RefSeq nucleotide sequence ID" value="NM_001320179.2"/>
    <property type="RefSeq protein sequence ID" value="NP_001307108.1"/>
</dbReference>
<dbReference type="UCSC" id="uc001cfo.4">
    <property type="organism name" value="human"/>
</dbReference>
<dbReference type="AGR" id="HGNC:24708"/>
<dbReference type="CTD" id="339559"/>
<dbReference type="DisGeNET" id="339559"/>
<dbReference type="GeneCards" id="ZFP69"/>
<dbReference type="HGNC" id="HGNC:24708">
    <property type="gene designation" value="ZFP69"/>
</dbReference>
<dbReference type="HPA" id="ENSG00000187815">
    <property type="expression patterns" value="Low tissue specificity"/>
</dbReference>
<dbReference type="MIM" id="617939">
    <property type="type" value="gene"/>
</dbReference>
<dbReference type="neXtProt" id="NX_Q49AA0"/>
<dbReference type="OpenTargets" id="ENSG00000187815"/>
<dbReference type="PharmGKB" id="PA134917508"/>
<dbReference type="VEuPathDB" id="HostDB:ENSG00000187815"/>
<dbReference type="eggNOG" id="KOG1721">
    <property type="taxonomic scope" value="Eukaryota"/>
</dbReference>
<dbReference type="GeneTree" id="ENSGT00940000162278"/>
<dbReference type="HOGENOM" id="CLU_002678_0_2_1"/>
<dbReference type="InParanoid" id="Q49AA0"/>
<dbReference type="OMA" id="RTKIYEC"/>
<dbReference type="OrthoDB" id="4748970at2759"/>
<dbReference type="PAN-GO" id="Q49AA0">
    <property type="GO annotations" value="3 GO annotations based on evolutionary models"/>
</dbReference>
<dbReference type="PhylomeDB" id="Q49AA0"/>
<dbReference type="TreeFam" id="TF337055"/>
<dbReference type="PathwayCommons" id="Q49AA0"/>
<dbReference type="Reactome" id="R-HSA-212436">
    <property type="pathway name" value="Generic Transcription Pathway"/>
</dbReference>
<dbReference type="BioGRID-ORCS" id="339559">
    <property type="hits" value="27 hits in 1170 CRISPR screens"/>
</dbReference>
<dbReference type="GenomeRNAi" id="339559"/>
<dbReference type="Pharos" id="Q49AA0">
    <property type="development level" value="Tdark"/>
</dbReference>
<dbReference type="PRO" id="PR:Q49AA0"/>
<dbReference type="Proteomes" id="UP000005640">
    <property type="component" value="Chromosome 1"/>
</dbReference>
<dbReference type="RNAct" id="Q49AA0">
    <property type="molecule type" value="protein"/>
</dbReference>
<dbReference type="Bgee" id="ENSG00000187815">
    <property type="expression patterns" value="Expressed in primordial germ cell in gonad and 129 other cell types or tissues"/>
</dbReference>
<dbReference type="GO" id="GO:0005634">
    <property type="term" value="C:nucleus"/>
    <property type="evidence" value="ECO:0000250"/>
    <property type="project" value="UniProtKB"/>
</dbReference>
<dbReference type="GO" id="GO:0000981">
    <property type="term" value="F:DNA-binding transcription factor activity, RNA polymerase II-specific"/>
    <property type="evidence" value="ECO:0000318"/>
    <property type="project" value="GO_Central"/>
</dbReference>
<dbReference type="GO" id="GO:0000977">
    <property type="term" value="F:RNA polymerase II transcription regulatory region sequence-specific DNA binding"/>
    <property type="evidence" value="ECO:0000318"/>
    <property type="project" value="GO_Central"/>
</dbReference>
<dbReference type="GO" id="GO:0008270">
    <property type="term" value="F:zinc ion binding"/>
    <property type="evidence" value="ECO:0007669"/>
    <property type="project" value="UniProtKB-KW"/>
</dbReference>
<dbReference type="GO" id="GO:0006629">
    <property type="term" value="P:lipid metabolic process"/>
    <property type="evidence" value="ECO:0007669"/>
    <property type="project" value="UniProtKB-KW"/>
</dbReference>
<dbReference type="GO" id="GO:0019216">
    <property type="term" value="P:regulation of lipid metabolic process"/>
    <property type="evidence" value="ECO:0000250"/>
    <property type="project" value="UniProtKB"/>
</dbReference>
<dbReference type="GO" id="GO:0006357">
    <property type="term" value="P:regulation of transcription by RNA polymerase II"/>
    <property type="evidence" value="ECO:0000318"/>
    <property type="project" value="GO_Central"/>
</dbReference>
<dbReference type="CDD" id="cd07765">
    <property type="entry name" value="KRAB_A-box"/>
    <property type="match status" value="1"/>
</dbReference>
<dbReference type="FunFam" id="3.30.160.60:FF:000029">
    <property type="entry name" value="GLI family zinc finger 4"/>
    <property type="match status" value="1"/>
</dbReference>
<dbReference type="FunFam" id="3.30.160.60:FF:000045">
    <property type="entry name" value="ZFP69 zinc finger protein B"/>
    <property type="match status" value="1"/>
</dbReference>
<dbReference type="FunFam" id="3.30.160.60:FF:000295">
    <property type="entry name" value="zinc finger protein 19"/>
    <property type="match status" value="1"/>
</dbReference>
<dbReference type="FunFam" id="3.30.160.60:FF:002343">
    <property type="entry name" value="Zinc finger protein 33A"/>
    <property type="match status" value="1"/>
</dbReference>
<dbReference type="FunFam" id="3.30.160.60:FF:002090">
    <property type="entry name" value="Zinc finger protein 473"/>
    <property type="match status" value="1"/>
</dbReference>
<dbReference type="FunFam" id="3.30.160.60:FF:000017">
    <property type="entry name" value="zinc finger protein 62 homolog"/>
    <property type="match status" value="1"/>
</dbReference>
<dbReference type="FunFam" id="3.30.160.60:FF:000099">
    <property type="entry name" value="Zinc finger protein 79"/>
    <property type="match status" value="1"/>
</dbReference>
<dbReference type="FunFam" id="3.30.160.60:FF:000307">
    <property type="entry name" value="Zinc finger protein ZFP69 isoform 1"/>
    <property type="match status" value="1"/>
</dbReference>
<dbReference type="FunFam" id="3.30.160.60:FF:000941">
    <property type="entry name" value="zinc finger protein ZFP69 isoform X2"/>
    <property type="match status" value="1"/>
</dbReference>
<dbReference type="Gene3D" id="6.10.140.140">
    <property type="match status" value="1"/>
</dbReference>
<dbReference type="Gene3D" id="3.30.160.60">
    <property type="entry name" value="Classic Zinc Finger"/>
    <property type="match status" value="9"/>
</dbReference>
<dbReference type="InterPro" id="IPR001909">
    <property type="entry name" value="KRAB"/>
</dbReference>
<dbReference type="InterPro" id="IPR036051">
    <property type="entry name" value="KRAB_dom_sf"/>
</dbReference>
<dbReference type="InterPro" id="IPR036236">
    <property type="entry name" value="Znf_C2H2_sf"/>
</dbReference>
<dbReference type="InterPro" id="IPR013087">
    <property type="entry name" value="Znf_C2H2_type"/>
</dbReference>
<dbReference type="PANTHER" id="PTHR24399:SF75">
    <property type="entry name" value="ZFP14 ZINC FINGER PROTEIN-RELATED"/>
    <property type="match status" value="1"/>
</dbReference>
<dbReference type="PANTHER" id="PTHR24399">
    <property type="entry name" value="ZINC FINGER AND BTB DOMAIN-CONTAINING"/>
    <property type="match status" value="1"/>
</dbReference>
<dbReference type="Pfam" id="PF01352">
    <property type="entry name" value="KRAB"/>
    <property type="match status" value="1"/>
</dbReference>
<dbReference type="Pfam" id="PF00096">
    <property type="entry name" value="zf-C2H2"/>
    <property type="match status" value="8"/>
</dbReference>
<dbReference type="SMART" id="SM00349">
    <property type="entry name" value="KRAB"/>
    <property type="match status" value="1"/>
</dbReference>
<dbReference type="SMART" id="SM00355">
    <property type="entry name" value="ZnF_C2H2"/>
    <property type="match status" value="9"/>
</dbReference>
<dbReference type="SUPFAM" id="SSF57667">
    <property type="entry name" value="beta-beta-alpha zinc fingers"/>
    <property type="match status" value="5"/>
</dbReference>
<dbReference type="SUPFAM" id="SSF109640">
    <property type="entry name" value="KRAB domain (Kruppel-associated box)"/>
    <property type="match status" value="1"/>
</dbReference>
<dbReference type="PROSITE" id="PS50805">
    <property type="entry name" value="KRAB"/>
    <property type="match status" value="1"/>
</dbReference>
<dbReference type="PROSITE" id="PS00028">
    <property type="entry name" value="ZINC_FINGER_C2H2_1"/>
    <property type="match status" value="9"/>
</dbReference>
<dbReference type="PROSITE" id="PS50157">
    <property type="entry name" value="ZINC_FINGER_C2H2_2"/>
    <property type="match status" value="9"/>
</dbReference>
<reference key="1">
    <citation type="journal article" date="2004" name="Nat. Genet.">
        <title>Complete sequencing and characterization of 21,243 full-length human cDNAs.</title>
        <authorList>
            <person name="Ota T."/>
            <person name="Suzuki Y."/>
            <person name="Nishikawa T."/>
            <person name="Otsuki T."/>
            <person name="Sugiyama T."/>
            <person name="Irie R."/>
            <person name="Wakamatsu A."/>
            <person name="Hayashi K."/>
            <person name="Sato H."/>
            <person name="Nagai K."/>
            <person name="Kimura K."/>
            <person name="Makita H."/>
            <person name="Sekine M."/>
            <person name="Obayashi M."/>
            <person name="Nishi T."/>
            <person name="Shibahara T."/>
            <person name="Tanaka T."/>
            <person name="Ishii S."/>
            <person name="Yamamoto J."/>
            <person name="Saito K."/>
            <person name="Kawai Y."/>
            <person name="Isono Y."/>
            <person name="Nakamura Y."/>
            <person name="Nagahari K."/>
            <person name="Murakami K."/>
            <person name="Yasuda T."/>
            <person name="Iwayanagi T."/>
            <person name="Wagatsuma M."/>
            <person name="Shiratori A."/>
            <person name="Sudo H."/>
            <person name="Hosoiri T."/>
            <person name="Kaku Y."/>
            <person name="Kodaira H."/>
            <person name="Kondo H."/>
            <person name="Sugawara M."/>
            <person name="Takahashi M."/>
            <person name="Kanda K."/>
            <person name="Yokoi T."/>
            <person name="Furuya T."/>
            <person name="Kikkawa E."/>
            <person name="Omura Y."/>
            <person name="Abe K."/>
            <person name="Kamihara K."/>
            <person name="Katsuta N."/>
            <person name="Sato K."/>
            <person name="Tanikawa M."/>
            <person name="Yamazaki M."/>
            <person name="Ninomiya K."/>
            <person name="Ishibashi T."/>
            <person name="Yamashita H."/>
            <person name="Murakawa K."/>
            <person name="Fujimori K."/>
            <person name="Tanai H."/>
            <person name="Kimata M."/>
            <person name="Watanabe M."/>
            <person name="Hiraoka S."/>
            <person name="Chiba Y."/>
            <person name="Ishida S."/>
            <person name="Ono Y."/>
            <person name="Takiguchi S."/>
            <person name="Watanabe S."/>
            <person name="Yosida M."/>
            <person name="Hotuta T."/>
            <person name="Kusano J."/>
            <person name="Kanehori K."/>
            <person name="Takahashi-Fujii A."/>
            <person name="Hara H."/>
            <person name="Tanase T.-O."/>
            <person name="Nomura Y."/>
            <person name="Togiya S."/>
            <person name="Komai F."/>
            <person name="Hara R."/>
            <person name="Takeuchi K."/>
            <person name="Arita M."/>
            <person name="Imose N."/>
            <person name="Musashino K."/>
            <person name="Yuuki H."/>
            <person name="Oshima A."/>
            <person name="Sasaki N."/>
            <person name="Aotsuka S."/>
            <person name="Yoshikawa Y."/>
            <person name="Matsunawa H."/>
            <person name="Ichihara T."/>
            <person name="Shiohata N."/>
            <person name="Sano S."/>
            <person name="Moriya S."/>
            <person name="Momiyama H."/>
            <person name="Satoh N."/>
            <person name="Takami S."/>
            <person name="Terashima Y."/>
            <person name="Suzuki O."/>
            <person name="Nakagawa S."/>
            <person name="Senoh A."/>
            <person name="Mizoguchi H."/>
            <person name="Goto Y."/>
            <person name="Shimizu F."/>
            <person name="Wakebe H."/>
            <person name="Hishigaki H."/>
            <person name="Watanabe T."/>
            <person name="Sugiyama A."/>
            <person name="Takemoto M."/>
            <person name="Kawakami B."/>
            <person name="Yamazaki M."/>
            <person name="Watanabe K."/>
            <person name="Kumagai A."/>
            <person name="Itakura S."/>
            <person name="Fukuzumi Y."/>
            <person name="Fujimori Y."/>
            <person name="Komiyama M."/>
            <person name="Tashiro H."/>
            <person name="Tanigami A."/>
            <person name="Fujiwara T."/>
            <person name="Ono T."/>
            <person name="Yamada K."/>
            <person name="Fujii Y."/>
            <person name="Ozaki K."/>
            <person name="Hirao M."/>
            <person name="Ohmori Y."/>
            <person name="Kawabata A."/>
            <person name="Hikiji T."/>
            <person name="Kobatake N."/>
            <person name="Inagaki H."/>
            <person name="Ikema Y."/>
            <person name="Okamoto S."/>
            <person name="Okitani R."/>
            <person name="Kawakami T."/>
            <person name="Noguchi S."/>
            <person name="Itoh T."/>
            <person name="Shigeta K."/>
            <person name="Senba T."/>
            <person name="Matsumura K."/>
            <person name="Nakajima Y."/>
            <person name="Mizuno T."/>
            <person name="Morinaga M."/>
            <person name="Sasaki M."/>
            <person name="Togashi T."/>
            <person name="Oyama M."/>
            <person name="Hata H."/>
            <person name="Watanabe M."/>
            <person name="Komatsu T."/>
            <person name="Mizushima-Sugano J."/>
            <person name="Satoh T."/>
            <person name="Shirai Y."/>
            <person name="Takahashi Y."/>
            <person name="Nakagawa K."/>
            <person name="Okumura K."/>
            <person name="Nagase T."/>
            <person name="Nomura N."/>
            <person name="Kikuchi H."/>
            <person name="Masuho Y."/>
            <person name="Yamashita R."/>
            <person name="Nakai K."/>
            <person name="Yada T."/>
            <person name="Nakamura Y."/>
            <person name="Ohara O."/>
            <person name="Isogai T."/>
            <person name="Sugano S."/>
        </authorList>
    </citation>
    <scope>NUCLEOTIDE SEQUENCE [LARGE SCALE MRNA]</scope>
</reference>
<reference key="2">
    <citation type="journal article" date="2006" name="Nature">
        <title>The DNA sequence and biological annotation of human chromosome 1.</title>
        <authorList>
            <person name="Gregory S.G."/>
            <person name="Barlow K.F."/>
            <person name="McLay K.E."/>
            <person name="Kaul R."/>
            <person name="Swarbreck D."/>
            <person name="Dunham A."/>
            <person name="Scott C.E."/>
            <person name="Howe K.L."/>
            <person name="Woodfine K."/>
            <person name="Spencer C.C.A."/>
            <person name="Jones M.C."/>
            <person name="Gillson C."/>
            <person name="Searle S."/>
            <person name="Zhou Y."/>
            <person name="Kokocinski F."/>
            <person name="McDonald L."/>
            <person name="Evans R."/>
            <person name="Phillips K."/>
            <person name="Atkinson A."/>
            <person name="Cooper R."/>
            <person name="Jones C."/>
            <person name="Hall R.E."/>
            <person name="Andrews T.D."/>
            <person name="Lloyd C."/>
            <person name="Ainscough R."/>
            <person name="Almeida J.P."/>
            <person name="Ambrose K.D."/>
            <person name="Anderson F."/>
            <person name="Andrew R.W."/>
            <person name="Ashwell R.I.S."/>
            <person name="Aubin K."/>
            <person name="Babbage A.K."/>
            <person name="Bagguley C.L."/>
            <person name="Bailey J."/>
            <person name="Beasley H."/>
            <person name="Bethel G."/>
            <person name="Bird C.P."/>
            <person name="Bray-Allen S."/>
            <person name="Brown J.Y."/>
            <person name="Brown A.J."/>
            <person name="Buckley D."/>
            <person name="Burton J."/>
            <person name="Bye J."/>
            <person name="Carder C."/>
            <person name="Chapman J.C."/>
            <person name="Clark S.Y."/>
            <person name="Clarke G."/>
            <person name="Clee C."/>
            <person name="Cobley V."/>
            <person name="Collier R.E."/>
            <person name="Corby N."/>
            <person name="Coville G.J."/>
            <person name="Davies J."/>
            <person name="Deadman R."/>
            <person name="Dunn M."/>
            <person name="Earthrowl M."/>
            <person name="Ellington A.G."/>
            <person name="Errington H."/>
            <person name="Frankish A."/>
            <person name="Frankland J."/>
            <person name="French L."/>
            <person name="Garner P."/>
            <person name="Garnett J."/>
            <person name="Gay L."/>
            <person name="Ghori M.R.J."/>
            <person name="Gibson R."/>
            <person name="Gilby L.M."/>
            <person name="Gillett W."/>
            <person name="Glithero R.J."/>
            <person name="Grafham D.V."/>
            <person name="Griffiths C."/>
            <person name="Griffiths-Jones S."/>
            <person name="Grocock R."/>
            <person name="Hammond S."/>
            <person name="Harrison E.S.I."/>
            <person name="Hart E."/>
            <person name="Haugen E."/>
            <person name="Heath P.D."/>
            <person name="Holmes S."/>
            <person name="Holt K."/>
            <person name="Howden P.J."/>
            <person name="Hunt A.R."/>
            <person name="Hunt S.E."/>
            <person name="Hunter G."/>
            <person name="Isherwood J."/>
            <person name="James R."/>
            <person name="Johnson C."/>
            <person name="Johnson D."/>
            <person name="Joy A."/>
            <person name="Kay M."/>
            <person name="Kershaw J.K."/>
            <person name="Kibukawa M."/>
            <person name="Kimberley A.M."/>
            <person name="King A."/>
            <person name="Knights A.J."/>
            <person name="Lad H."/>
            <person name="Laird G."/>
            <person name="Lawlor S."/>
            <person name="Leongamornlert D.A."/>
            <person name="Lloyd D.M."/>
            <person name="Loveland J."/>
            <person name="Lovell J."/>
            <person name="Lush M.J."/>
            <person name="Lyne R."/>
            <person name="Martin S."/>
            <person name="Mashreghi-Mohammadi M."/>
            <person name="Matthews L."/>
            <person name="Matthews N.S.W."/>
            <person name="McLaren S."/>
            <person name="Milne S."/>
            <person name="Mistry S."/>
            <person name="Moore M.J.F."/>
            <person name="Nickerson T."/>
            <person name="O'Dell C.N."/>
            <person name="Oliver K."/>
            <person name="Palmeiri A."/>
            <person name="Palmer S.A."/>
            <person name="Parker A."/>
            <person name="Patel D."/>
            <person name="Pearce A.V."/>
            <person name="Peck A.I."/>
            <person name="Pelan S."/>
            <person name="Phelps K."/>
            <person name="Phillimore B.J."/>
            <person name="Plumb R."/>
            <person name="Rajan J."/>
            <person name="Raymond C."/>
            <person name="Rouse G."/>
            <person name="Saenphimmachak C."/>
            <person name="Sehra H.K."/>
            <person name="Sheridan E."/>
            <person name="Shownkeen R."/>
            <person name="Sims S."/>
            <person name="Skuce C.D."/>
            <person name="Smith M."/>
            <person name="Steward C."/>
            <person name="Subramanian S."/>
            <person name="Sycamore N."/>
            <person name="Tracey A."/>
            <person name="Tromans A."/>
            <person name="Van Helmond Z."/>
            <person name="Wall M."/>
            <person name="Wallis J.M."/>
            <person name="White S."/>
            <person name="Whitehead S.L."/>
            <person name="Wilkinson J.E."/>
            <person name="Willey D.L."/>
            <person name="Williams H."/>
            <person name="Wilming L."/>
            <person name="Wray P.W."/>
            <person name="Wu Z."/>
            <person name="Coulson A."/>
            <person name="Vaudin M."/>
            <person name="Sulston J.E."/>
            <person name="Durbin R.M."/>
            <person name="Hubbard T."/>
            <person name="Wooster R."/>
            <person name="Dunham I."/>
            <person name="Carter N.P."/>
            <person name="McVean G."/>
            <person name="Ross M.T."/>
            <person name="Harrow J."/>
            <person name="Olson M.V."/>
            <person name="Beck S."/>
            <person name="Rogers J."/>
            <person name="Bentley D.R."/>
        </authorList>
    </citation>
    <scope>NUCLEOTIDE SEQUENCE [LARGE SCALE GENOMIC DNA]</scope>
</reference>
<reference key="3">
    <citation type="journal article" date="2004" name="Genome Res.">
        <title>The status, quality, and expansion of the NIH full-length cDNA project: the Mammalian Gene Collection (MGC).</title>
        <authorList>
            <consortium name="The MGC Project Team"/>
        </authorList>
    </citation>
    <scope>NUCLEOTIDE SEQUENCE [LARGE SCALE MRNA]</scope>
    <source>
        <tissue>Testis</tissue>
    </source>
</reference>
<reference key="4">
    <citation type="journal article" date="2009" name="PLoS Genet.">
        <title>Positional cloning of zinc finger domain transcription factor Zfp69, a candidate gene for obesity-associated diabetes contributed by mouse locus Nidd/SJL.</title>
        <authorList>
            <person name="Scherneck S."/>
            <person name="Nestler M."/>
            <person name="Vogel H."/>
            <person name="Blueher M."/>
            <person name="Block M.D."/>
            <person name="Berriel Diaz M."/>
            <person name="Herzig S."/>
            <person name="Schulz N."/>
            <person name="Teichert M."/>
            <person name="Tischer S."/>
            <person name="Al-Hasani H."/>
            <person name="Kluge R."/>
            <person name="Schuermann A."/>
            <person name="Joost H.G."/>
        </authorList>
    </citation>
    <scope>TISSUE SPECIFICITY</scope>
    <scope>INDUCTION</scope>
</reference>